<dbReference type="EC" id="5.1.1.7" evidence="1"/>
<dbReference type="EMBL" id="AE009442">
    <property type="protein sequence ID" value="AAO28569.1"/>
    <property type="status" value="ALT_INIT"/>
    <property type="molecule type" value="Genomic_DNA"/>
</dbReference>
<dbReference type="RefSeq" id="WP_012382526.1">
    <property type="nucleotide sequence ID" value="NC_004556.1"/>
</dbReference>
<dbReference type="SMR" id="Q87DI4"/>
<dbReference type="GeneID" id="93904478"/>
<dbReference type="KEGG" id="xft:PD_0698"/>
<dbReference type="HOGENOM" id="CLU_053306_1_1_6"/>
<dbReference type="UniPathway" id="UPA00034">
    <property type="reaction ID" value="UER00025"/>
</dbReference>
<dbReference type="Proteomes" id="UP000002516">
    <property type="component" value="Chromosome"/>
</dbReference>
<dbReference type="GO" id="GO:0005829">
    <property type="term" value="C:cytosol"/>
    <property type="evidence" value="ECO:0007669"/>
    <property type="project" value="TreeGrafter"/>
</dbReference>
<dbReference type="GO" id="GO:0008837">
    <property type="term" value="F:diaminopimelate epimerase activity"/>
    <property type="evidence" value="ECO:0007669"/>
    <property type="project" value="UniProtKB-UniRule"/>
</dbReference>
<dbReference type="GO" id="GO:0009089">
    <property type="term" value="P:lysine biosynthetic process via diaminopimelate"/>
    <property type="evidence" value="ECO:0007669"/>
    <property type="project" value="UniProtKB-UniRule"/>
</dbReference>
<dbReference type="Gene3D" id="3.10.310.10">
    <property type="entry name" value="Diaminopimelate Epimerase, Chain A, domain 1"/>
    <property type="match status" value="2"/>
</dbReference>
<dbReference type="HAMAP" id="MF_00197">
    <property type="entry name" value="DAP_epimerase"/>
    <property type="match status" value="1"/>
</dbReference>
<dbReference type="InterPro" id="IPR018510">
    <property type="entry name" value="DAP_epimerase_AS"/>
</dbReference>
<dbReference type="InterPro" id="IPR001653">
    <property type="entry name" value="DAP_epimerase_DapF"/>
</dbReference>
<dbReference type="NCBIfam" id="TIGR00652">
    <property type="entry name" value="DapF"/>
    <property type="match status" value="1"/>
</dbReference>
<dbReference type="PANTHER" id="PTHR31689:SF0">
    <property type="entry name" value="DIAMINOPIMELATE EPIMERASE"/>
    <property type="match status" value="1"/>
</dbReference>
<dbReference type="PANTHER" id="PTHR31689">
    <property type="entry name" value="DIAMINOPIMELATE EPIMERASE, CHLOROPLASTIC"/>
    <property type="match status" value="1"/>
</dbReference>
<dbReference type="Pfam" id="PF01678">
    <property type="entry name" value="DAP_epimerase"/>
    <property type="match status" value="2"/>
</dbReference>
<dbReference type="SUPFAM" id="SSF54506">
    <property type="entry name" value="Diaminopimelate epimerase-like"/>
    <property type="match status" value="2"/>
</dbReference>
<dbReference type="PROSITE" id="PS01326">
    <property type="entry name" value="DAP_EPIMERASE"/>
    <property type="match status" value="1"/>
</dbReference>
<evidence type="ECO:0000255" key="1">
    <source>
        <dbReference type="HAMAP-Rule" id="MF_00197"/>
    </source>
</evidence>
<evidence type="ECO:0000305" key="2"/>
<sequence>MGVESVRCPLHFTKMQGAGNDFVVLDLRDGTPPPDAALVAWLADRHFGIGCDQVIAIEPPRGVGVFAAYRIWNADGSAAQQCGNGARCVAAWLVRDGSVATEHFLIDSPVQTHSVRCIGKDEYAVEMGLPVFEPERIPLSGFPNALGEYVLSLQGEVLCCGAVSMGNPHAVVEVDLIDVAPVERIGPLLQQHSAFPESVNVSFVQVIDPGLVRLRVYERGAGETLACGSGACAAAVVLMQRGRVGRDVRVVLPGGTLRVQWPVSGGPVTLSGPARCVFDGVWYG</sequence>
<gene>
    <name evidence="1" type="primary">dapF</name>
    <name type="ordered locus">PD_0698</name>
</gene>
<proteinExistence type="inferred from homology"/>
<comment type="function">
    <text evidence="1">Catalyzes the stereoinversion of LL-2,6-diaminopimelate (L,L-DAP) to meso-diaminopimelate (meso-DAP), a precursor of L-lysine and an essential component of the bacterial peptidoglycan.</text>
</comment>
<comment type="catalytic activity">
    <reaction evidence="1">
        <text>(2S,6S)-2,6-diaminopimelate = meso-2,6-diaminopimelate</text>
        <dbReference type="Rhea" id="RHEA:15393"/>
        <dbReference type="ChEBI" id="CHEBI:57609"/>
        <dbReference type="ChEBI" id="CHEBI:57791"/>
        <dbReference type="EC" id="5.1.1.7"/>
    </reaction>
</comment>
<comment type="pathway">
    <text evidence="1">Amino-acid biosynthesis; L-lysine biosynthesis via DAP pathway; DL-2,6-diaminopimelate from LL-2,6-diaminopimelate: step 1/1.</text>
</comment>
<comment type="subunit">
    <text evidence="1">Homodimer.</text>
</comment>
<comment type="subcellular location">
    <subcellularLocation>
        <location evidence="1">Cytoplasm</location>
    </subcellularLocation>
</comment>
<comment type="similarity">
    <text evidence="1">Belongs to the diaminopimelate epimerase family.</text>
</comment>
<comment type="sequence caution" evidence="2">
    <conflict type="erroneous initiation">
        <sequence resource="EMBL-CDS" id="AAO28569"/>
    </conflict>
    <text>Truncated N-terminus.</text>
</comment>
<organism>
    <name type="scientific">Xylella fastidiosa (strain Temecula1 / ATCC 700964)</name>
    <dbReference type="NCBI Taxonomy" id="183190"/>
    <lineage>
        <taxon>Bacteria</taxon>
        <taxon>Pseudomonadati</taxon>
        <taxon>Pseudomonadota</taxon>
        <taxon>Gammaproteobacteria</taxon>
        <taxon>Lysobacterales</taxon>
        <taxon>Lysobacteraceae</taxon>
        <taxon>Xylella</taxon>
    </lineage>
</organism>
<name>DAPF_XYLFT</name>
<keyword id="KW-0028">Amino-acid biosynthesis</keyword>
<keyword id="KW-0963">Cytoplasm</keyword>
<keyword id="KW-0413">Isomerase</keyword>
<keyword id="KW-0457">Lysine biosynthesis</keyword>
<keyword id="KW-1185">Reference proteome</keyword>
<reference key="1">
    <citation type="journal article" date="2003" name="J. Bacteriol.">
        <title>Comparative analyses of the complete genome sequences of Pierce's disease and citrus variegated chlorosis strains of Xylella fastidiosa.</title>
        <authorList>
            <person name="Van Sluys M.A."/>
            <person name="de Oliveira M.C."/>
            <person name="Monteiro-Vitorello C.B."/>
            <person name="Miyaki C.Y."/>
            <person name="Furlan L.R."/>
            <person name="Camargo L.E.A."/>
            <person name="da Silva A.C.R."/>
            <person name="Moon D.H."/>
            <person name="Takita M.A."/>
            <person name="Lemos E.G.M."/>
            <person name="Machado M.A."/>
            <person name="Ferro M.I.T."/>
            <person name="da Silva F.R."/>
            <person name="Goldman M.H.S."/>
            <person name="Goldman G.H."/>
            <person name="Lemos M.V.F."/>
            <person name="El-Dorry H."/>
            <person name="Tsai S.M."/>
            <person name="Carrer H."/>
            <person name="Carraro D.M."/>
            <person name="de Oliveira R.C."/>
            <person name="Nunes L.R."/>
            <person name="Siqueira W.J."/>
            <person name="Coutinho L.L."/>
            <person name="Kimura E.T."/>
            <person name="Ferro E.S."/>
            <person name="Harakava R."/>
            <person name="Kuramae E.E."/>
            <person name="Marino C.L."/>
            <person name="Giglioti E."/>
            <person name="Abreu I.L."/>
            <person name="Alves L.M.C."/>
            <person name="do Amaral A.M."/>
            <person name="Baia G.S."/>
            <person name="Blanco S.R."/>
            <person name="Brito M.S."/>
            <person name="Cannavan F.S."/>
            <person name="Celestino A.V."/>
            <person name="da Cunha A.F."/>
            <person name="Fenille R.C."/>
            <person name="Ferro J.A."/>
            <person name="Formighieri E.F."/>
            <person name="Kishi L.T."/>
            <person name="Leoni S.G."/>
            <person name="Oliveira A.R."/>
            <person name="Rosa V.E. Jr."/>
            <person name="Sassaki F.T."/>
            <person name="Sena J.A.D."/>
            <person name="de Souza A.A."/>
            <person name="Truffi D."/>
            <person name="Tsukumo F."/>
            <person name="Yanai G.M."/>
            <person name="Zaros L.G."/>
            <person name="Civerolo E.L."/>
            <person name="Simpson A.J.G."/>
            <person name="Almeida N.F. Jr."/>
            <person name="Setubal J.C."/>
            <person name="Kitajima J.P."/>
        </authorList>
    </citation>
    <scope>NUCLEOTIDE SEQUENCE [LARGE SCALE GENOMIC DNA]</scope>
    <source>
        <strain>Temecula1 / ATCC 700964</strain>
    </source>
</reference>
<protein>
    <recommendedName>
        <fullName evidence="1">Diaminopimelate epimerase</fullName>
        <shortName evidence="1">DAP epimerase</shortName>
        <ecNumber evidence="1">5.1.1.7</ecNumber>
    </recommendedName>
    <alternativeName>
        <fullName evidence="1">PLP-independent amino acid racemase</fullName>
    </alternativeName>
</protein>
<feature type="chain" id="PRO_0000149883" description="Diaminopimelate epimerase">
    <location>
        <begin position="1"/>
        <end position="284"/>
    </location>
</feature>
<feature type="active site" description="Proton donor" evidence="1">
    <location>
        <position position="82"/>
    </location>
</feature>
<feature type="active site" description="Proton acceptor" evidence="1">
    <location>
        <position position="227"/>
    </location>
</feature>
<feature type="binding site" evidence="1">
    <location>
        <position position="20"/>
    </location>
    <ligand>
        <name>substrate</name>
    </ligand>
</feature>
<feature type="binding site" evidence="1">
    <location>
        <position position="53"/>
    </location>
    <ligand>
        <name>substrate</name>
    </ligand>
</feature>
<feature type="binding site" evidence="1">
    <location>
        <position position="73"/>
    </location>
    <ligand>
        <name>substrate</name>
    </ligand>
</feature>
<feature type="binding site" evidence="1">
    <location>
        <begin position="83"/>
        <end position="84"/>
    </location>
    <ligand>
        <name>substrate</name>
    </ligand>
</feature>
<feature type="binding site" evidence="1">
    <location>
        <position position="167"/>
    </location>
    <ligand>
        <name>substrate</name>
    </ligand>
</feature>
<feature type="binding site" evidence="1">
    <location>
        <position position="200"/>
    </location>
    <ligand>
        <name>substrate</name>
    </ligand>
</feature>
<feature type="binding site" evidence="1">
    <location>
        <begin position="218"/>
        <end position="219"/>
    </location>
    <ligand>
        <name>substrate</name>
    </ligand>
</feature>
<feature type="binding site" evidence="1">
    <location>
        <begin position="228"/>
        <end position="229"/>
    </location>
    <ligand>
        <name>substrate</name>
    </ligand>
</feature>
<feature type="site" description="Could be important to modulate the pK values of the two catalytic cysteine residues" evidence="1">
    <location>
        <position position="169"/>
    </location>
</feature>
<feature type="site" description="Could be important to modulate the pK values of the two catalytic cysteine residues" evidence="1">
    <location>
        <position position="218"/>
    </location>
</feature>
<feature type="site" description="Important for dimerization" evidence="1">
    <location>
        <position position="278"/>
    </location>
</feature>
<accession>Q87DI4</accession>